<comment type="function">
    <text evidence="1">Protein S19 forms a complex with S13 that binds strongly to the 16S ribosomal RNA.</text>
</comment>
<comment type="similarity">
    <text evidence="2">Belongs to the universal ribosomal protein uS19 family.</text>
</comment>
<reference key="1">
    <citation type="journal article" date="2000" name="Nucleic Acids Res.">
        <title>Genome sequences of Chlamydia trachomatis MoPn and Chlamydia pneumoniae AR39.</title>
        <authorList>
            <person name="Read T.D."/>
            <person name="Brunham R.C."/>
            <person name="Shen C."/>
            <person name="Gill S.R."/>
            <person name="Heidelberg J.F."/>
            <person name="White O."/>
            <person name="Hickey E.K."/>
            <person name="Peterson J.D."/>
            <person name="Utterback T.R."/>
            <person name="Berry K.J."/>
            <person name="Bass S."/>
            <person name="Linher K.D."/>
            <person name="Weidman J.F."/>
            <person name="Khouri H.M."/>
            <person name="Craven B."/>
            <person name="Bowman C."/>
            <person name="Dodson R.J."/>
            <person name="Gwinn M.L."/>
            <person name="Nelson W.C."/>
            <person name="DeBoy R.T."/>
            <person name="Kolonay J.F."/>
            <person name="McClarty G."/>
            <person name="Salzberg S.L."/>
            <person name="Eisen J.A."/>
            <person name="Fraser C.M."/>
        </authorList>
    </citation>
    <scope>NUCLEOTIDE SEQUENCE [LARGE SCALE GENOMIC DNA]</scope>
    <source>
        <strain>MoPn / Nigg</strain>
    </source>
</reference>
<dbReference type="EMBL" id="AE002160">
    <property type="protein sequence ID" value="AAF73605.1"/>
    <property type="molecule type" value="Genomic_DNA"/>
</dbReference>
<dbReference type="RefSeq" id="WP_009871888.1">
    <property type="nucleotide sequence ID" value="NZ_CP063055.1"/>
</dbReference>
<dbReference type="SMR" id="P66481"/>
<dbReference type="GeneID" id="93065363"/>
<dbReference type="KEGG" id="cmu:TC_0811"/>
<dbReference type="eggNOG" id="COG0185">
    <property type="taxonomic scope" value="Bacteria"/>
</dbReference>
<dbReference type="HOGENOM" id="CLU_144911_0_1_0"/>
<dbReference type="OrthoDB" id="9797833at2"/>
<dbReference type="Proteomes" id="UP000000800">
    <property type="component" value="Chromosome"/>
</dbReference>
<dbReference type="GO" id="GO:0005737">
    <property type="term" value="C:cytoplasm"/>
    <property type="evidence" value="ECO:0007669"/>
    <property type="project" value="UniProtKB-ARBA"/>
</dbReference>
<dbReference type="GO" id="GO:0015935">
    <property type="term" value="C:small ribosomal subunit"/>
    <property type="evidence" value="ECO:0007669"/>
    <property type="project" value="InterPro"/>
</dbReference>
<dbReference type="GO" id="GO:0019843">
    <property type="term" value="F:rRNA binding"/>
    <property type="evidence" value="ECO:0007669"/>
    <property type="project" value="UniProtKB-UniRule"/>
</dbReference>
<dbReference type="GO" id="GO:0003735">
    <property type="term" value="F:structural constituent of ribosome"/>
    <property type="evidence" value="ECO:0007669"/>
    <property type="project" value="InterPro"/>
</dbReference>
<dbReference type="GO" id="GO:0000028">
    <property type="term" value="P:ribosomal small subunit assembly"/>
    <property type="evidence" value="ECO:0007669"/>
    <property type="project" value="TreeGrafter"/>
</dbReference>
<dbReference type="GO" id="GO:0006412">
    <property type="term" value="P:translation"/>
    <property type="evidence" value="ECO:0007669"/>
    <property type="project" value="UniProtKB-UniRule"/>
</dbReference>
<dbReference type="FunFam" id="3.30.860.10:FF:000001">
    <property type="entry name" value="30S ribosomal protein S19"/>
    <property type="match status" value="1"/>
</dbReference>
<dbReference type="Gene3D" id="3.30.860.10">
    <property type="entry name" value="30s Ribosomal Protein S19, Chain A"/>
    <property type="match status" value="1"/>
</dbReference>
<dbReference type="HAMAP" id="MF_00531">
    <property type="entry name" value="Ribosomal_uS19"/>
    <property type="match status" value="1"/>
</dbReference>
<dbReference type="InterPro" id="IPR002222">
    <property type="entry name" value="Ribosomal_uS19"/>
</dbReference>
<dbReference type="InterPro" id="IPR005732">
    <property type="entry name" value="Ribosomal_uS19_bac-type"/>
</dbReference>
<dbReference type="InterPro" id="IPR020934">
    <property type="entry name" value="Ribosomal_uS19_CS"/>
</dbReference>
<dbReference type="InterPro" id="IPR023575">
    <property type="entry name" value="Ribosomal_uS19_SF"/>
</dbReference>
<dbReference type="NCBIfam" id="TIGR01050">
    <property type="entry name" value="rpsS_bact"/>
    <property type="match status" value="1"/>
</dbReference>
<dbReference type="PANTHER" id="PTHR11880">
    <property type="entry name" value="RIBOSOMAL PROTEIN S19P FAMILY MEMBER"/>
    <property type="match status" value="1"/>
</dbReference>
<dbReference type="PANTHER" id="PTHR11880:SF8">
    <property type="entry name" value="SMALL RIBOSOMAL SUBUNIT PROTEIN US19M"/>
    <property type="match status" value="1"/>
</dbReference>
<dbReference type="Pfam" id="PF00203">
    <property type="entry name" value="Ribosomal_S19"/>
    <property type="match status" value="1"/>
</dbReference>
<dbReference type="PIRSF" id="PIRSF002144">
    <property type="entry name" value="Ribosomal_S19"/>
    <property type="match status" value="1"/>
</dbReference>
<dbReference type="PRINTS" id="PR00975">
    <property type="entry name" value="RIBOSOMALS19"/>
</dbReference>
<dbReference type="SUPFAM" id="SSF54570">
    <property type="entry name" value="Ribosomal protein S19"/>
    <property type="match status" value="1"/>
</dbReference>
<dbReference type="PROSITE" id="PS00323">
    <property type="entry name" value="RIBOSOMAL_S19"/>
    <property type="match status" value="1"/>
</dbReference>
<keyword id="KW-0687">Ribonucleoprotein</keyword>
<keyword id="KW-0689">Ribosomal protein</keyword>
<keyword id="KW-0694">RNA-binding</keyword>
<keyword id="KW-0699">rRNA-binding</keyword>
<accession>P66481</accession>
<accession>O84529</accession>
<accession>Q9PJL8</accession>
<sequence>MSRSLRKGPFVDHHLLKKVRDMNALEKKTPIKTWSRRSMITPEMIGHTFEVHNGRKFLTVFVSETMVGHKLGEFSPTRMFKSHPVKKG</sequence>
<evidence type="ECO:0000250" key="1"/>
<evidence type="ECO:0000305" key="2"/>
<name>RS19_CHLMU</name>
<proteinExistence type="inferred from homology"/>
<protein>
    <recommendedName>
        <fullName evidence="2">Small ribosomal subunit protein uS19</fullName>
    </recommendedName>
    <alternativeName>
        <fullName>30S ribosomal protein S19</fullName>
    </alternativeName>
</protein>
<organism>
    <name type="scientific">Chlamydia muridarum (strain MoPn / Nigg)</name>
    <dbReference type="NCBI Taxonomy" id="243161"/>
    <lineage>
        <taxon>Bacteria</taxon>
        <taxon>Pseudomonadati</taxon>
        <taxon>Chlamydiota</taxon>
        <taxon>Chlamydiia</taxon>
        <taxon>Chlamydiales</taxon>
        <taxon>Chlamydiaceae</taxon>
        <taxon>Chlamydia/Chlamydophila group</taxon>
        <taxon>Chlamydia</taxon>
    </lineage>
</organism>
<gene>
    <name type="primary">rpsS</name>
    <name type="synonym">rs19</name>
    <name type="ordered locus">TC_0811</name>
</gene>
<feature type="chain" id="PRO_0000129806" description="Small ribosomal subunit protein uS19">
    <location>
        <begin position="1"/>
        <end position="88"/>
    </location>
</feature>